<protein>
    <recommendedName>
        <fullName>Probable cobalt/nickel-exporting P-type ATPase</fullName>
        <ecNumber>7.2.2.-</ecNumber>
    </recommendedName>
    <alternativeName>
        <fullName>Cation-transporting P-type ATPase CtpD</fullName>
    </alternativeName>
</protein>
<organism>
    <name type="scientific">Mycobacterium tuberculosis (strain CDC 1551 / Oshkosh)</name>
    <dbReference type="NCBI Taxonomy" id="83331"/>
    <lineage>
        <taxon>Bacteria</taxon>
        <taxon>Bacillati</taxon>
        <taxon>Actinomycetota</taxon>
        <taxon>Actinomycetes</taxon>
        <taxon>Mycobacteriales</taxon>
        <taxon>Mycobacteriaceae</taxon>
        <taxon>Mycobacterium</taxon>
        <taxon>Mycobacterium tuberculosis complex</taxon>
    </lineage>
</organism>
<feature type="chain" id="PRO_0000426892" description="Probable cobalt/nickel-exporting P-type ATPase">
    <location>
        <begin position="1"/>
        <end position="657"/>
    </location>
</feature>
<feature type="transmembrane region" description="Helical" evidence="2">
    <location>
        <begin position="40"/>
        <end position="60"/>
    </location>
</feature>
<feature type="transmembrane region" description="Helical" evidence="2">
    <location>
        <begin position="62"/>
        <end position="82"/>
    </location>
</feature>
<feature type="transmembrane region" description="Helical" evidence="2">
    <location>
        <begin position="101"/>
        <end position="121"/>
    </location>
</feature>
<feature type="transmembrane region" description="Helical" evidence="2">
    <location>
        <begin position="268"/>
        <end position="288"/>
    </location>
</feature>
<feature type="transmembrane region" description="Helical" evidence="2">
    <location>
        <begin position="299"/>
        <end position="319"/>
    </location>
</feature>
<feature type="transmembrane region" description="Helical" evidence="2">
    <location>
        <begin position="596"/>
        <end position="618"/>
    </location>
</feature>
<feature type="active site" description="4-aspartylphosphate intermediate" evidence="1">
    <location>
        <position position="347"/>
    </location>
</feature>
<feature type="binding site" evidence="1">
    <location>
        <position position="543"/>
    </location>
    <ligand>
        <name>Mg(2+)</name>
        <dbReference type="ChEBI" id="CHEBI:18420"/>
    </ligand>
</feature>
<feature type="binding site" evidence="1">
    <location>
        <position position="547"/>
    </location>
    <ligand>
        <name>Mg(2+)</name>
        <dbReference type="ChEBI" id="CHEBI:18420"/>
    </ligand>
</feature>
<keyword id="KW-0067">ATP-binding</keyword>
<keyword id="KW-1003">Cell membrane</keyword>
<keyword id="KW-0170">Cobalt</keyword>
<keyword id="KW-0460">Magnesium</keyword>
<keyword id="KW-0472">Membrane</keyword>
<keyword id="KW-0479">Metal-binding</keyword>
<keyword id="KW-0533">Nickel</keyword>
<keyword id="KW-0547">Nucleotide-binding</keyword>
<keyword id="KW-0597">Phosphoprotein</keyword>
<keyword id="KW-1185">Reference proteome</keyword>
<keyword id="KW-1278">Translocase</keyword>
<keyword id="KW-0812">Transmembrane</keyword>
<keyword id="KW-1133">Transmembrane helix</keyword>
<proteinExistence type="inferred from homology"/>
<comment type="function">
    <text evidence="1">Involved in heavy metal homeostasis. Probably exports nickel and cobalt ions out of the cell (By similarity).</text>
</comment>
<comment type="catalytic activity">
    <reaction>
        <text>Ni(2+)(out) + ATP + H2O = Ni(2+)(in) + ADP + phosphate + H(+)</text>
        <dbReference type="Rhea" id="RHEA:15557"/>
        <dbReference type="ChEBI" id="CHEBI:15377"/>
        <dbReference type="ChEBI" id="CHEBI:15378"/>
        <dbReference type="ChEBI" id="CHEBI:30616"/>
        <dbReference type="ChEBI" id="CHEBI:43474"/>
        <dbReference type="ChEBI" id="CHEBI:49786"/>
        <dbReference type="ChEBI" id="CHEBI:456216"/>
    </reaction>
</comment>
<comment type="catalytic activity">
    <reaction>
        <text>Co(2+)(out) + ATP + H2O = Co(2+)(in) + ADP + phosphate + H(+)</text>
        <dbReference type="Rhea" id="RHEA:32779"/>
        <dbReference type="ChEBI" id="CHEBI:15377"/>
        <dbReference type="ChEBI" id="CHEBI:15378"/>
        <dbReference type="ChEBI" id="CHEBI:30616"/>
        <dbReference type="ChEBI" id="CHEBI:43474"/>
        <dbReference type="ChEBI" id="CHEBI:48828"/>
        <dbReference type="ChEBI" id="CHEBI:456216"/>
    </reaction>
</comment>
<comment type="subcellular location">
    <subcellularLocation>
        <location evidence="3">Cell membrane</location>
        <topology evidence="3">Multi-pass membrane protein</topology>
    </subcellularLocation>
</comment>
<comment type="similarity">
    <text evidence="3">Belongs to the cation transport ATPase (P-type) (TC 3.A.3) family. Type IB subfamily.</text>
</comment>
<evidence type="ECO:0000250" key="1"/>
<evidence type="ECO:0000255" key="2"/>
<evidence type="ECO:0000305" key="3"/>
<gene>
    <name type="primary">ctpD</name>
    <name type="ordered locus">MT1515</name>
</gene>
<reference key="1">
    <citation type="journal article" date="2002" name="J. Bacteriol.">
        <title>Whole-genome comparison of Mycobacterium tuberculosis clinical and laboratory strains.</title>
        <authorList>
            <person name="Fleischmann R.D."/>
            <person name="Alland D."/>
            <person name="Eisen J.A."/>
            <person name="Carpenter L."/>
            <person name="White O."/>
            <person name="Peterson J.D."/>
            <person name="DeBoy R.T."/>
            <person name="Dodson R.J."/>
            <person name="Gwinn M.L."/>
            <person name="Haft D.H."/>
            <person name="Hickey E.K."/>
            <person name="Kolonay J.F."/>
            <person name="Nelson W.C."/>
            <person name="Umayam L.A."/>
            <person name="Ermolaeva M.D."/>
            <person name="Salzberg S.L."/>
            <person name="Delcher A."/>
            <person name="Utterback T.R."/>
            <person name="Weidman J.F."/>
            <person name="Khouri H.M."/>
            <person name="Gill J."/>
            <person name="Mikula A."/>
            <person name="Bishai W."/>
            <person name="Jacobs W.R. Jr."/>
            <person name="Venter J.C."/>
            <person name="Fraser C.M."/>
        </authorList>
    </citation>
    <scope>NUCLEOTIDE SEQUENCE [LARGE SCALE GENOMIC DNA]</scope>
    <source>
        <strain>CDC 1551 / Oshkosh</strain>
    </source>
</reference>
<accession>P9WPT2</accession>
<accession>L0T9Q3</accession>
<accession>O53160</accession>
<accession>P63685</accession>
<name>CTPD_MYCTO</name>
<dbReference type="EC" id="7.2.2.-"/>
<dbReference type="EMBL" id="AE000516">
    <property type="protein sequence ID" value="AAK45780.1"/>
    <property type="molecule type" value="Genomic_DNA"/>
</dbReference>
<dbReference type="PIR" id="H70872">
    <property type="entry name" value="H70872"/>
</dbReference>
<dbReference type="RefSeq" id="WP_003900344.1">
    <property type="nucleotide sequence ID" value="NZ_KK341227.1"/>
</dbReference>
<dbReference type="SMR" id="P9WPT2"/>
<dbReference type="KEGG" id="mtc:MT1515"/>
<dbReference type="PATRIC" id="fig|83331.31.peg.1630"/>
<dbReference type="HOGENOM" id="CLU_001771_6_3_11"/>
<dbReference type="Proteomes" id="UP000001020">
    <property type="component" value="Chromosome"/>
</dbReference>
<dbReference type="GO" id="GO:0005886">
    <property type="term" value="C:plasma membrane"/>
    <property type="evidence" value="ECO:0007669"/>
    <property type="project" value="UniProtKB-SubCell"/>
</dbReference>
<dbReference type="GO" id="GO:0015413">
    <property type="term" value="F:ABC-type nickel transporter activity"/>
    <property type="evidence" value="ECO:0007669"/>
    <property type="project" value="RHEA"/>
</dbReference>
<dbReference type="GO" id="GO:0005524">
    <property type="term" value="F:ATP binding"/>
    <property type="evidence" value="ECO:0007669"/>
    <property type="project" value="UniProtKB-KW"/>
</dbReference>
<dbReference type="GO" id="GO:0016887">
    <property type="term" value="F:ATP hydrolysis activity"/>
    <property type="evidence" value="ECO:0007669"/>
    <property type="project" value="InterPro"/>
</dbReference>
<dbReference type="GO" id="GO:0046872">
    <property type="term" value="F:metal ion binding"/>
    <property type="evidence" value="ECO:0007669"/>
    <property type="project" value="UniProtKB-KW"/>
</dbReference>
<dbReference type="GO" id="GO:0032778">
    <property type="term" value="F:P-type cobalt transporter activity"/>
    <property type="evidence" value="ECO:0007669"/>
    <property type="project" value="RHEA"/>
</dbReference>
<dbReference type="CDD" id="cd07551">
    <property type="entry name" value="P-type_ATPase_HM_ZosA_PfeT-like"/>
    <property type="match status" value="1"/>
</dbReference>
<dbReference type="FunFam" id="2.70.150.10:FF:000002">
    <property type="entry name" value="Copper-transporting ATPase 1, putative"/>
    <property type="match status" value="1"/>
</dbReference>
<dbReference type="Gene3D" id="3.40.1110.10">
    <property type="entry name" value="Calcium-transporting ATPase, cytoplasmic domain N"/>
    <property type="match status" value="1"/>
</dbReference>
<dbReference type="Gene3D" id="2.70.150.10">
    <property type="entry name" value="Calcium-transporting ATPase, cytoplasmic transduction domain A"/>
    <property type="match status" value="1"/>
</dbReference>
<dbReference type="Gene3D" id="3.40.50.1000">
    <property type="entry name" value="HAD superfamily/HAD-like"/>
    <property type="match status" value="1"/>
</dbReference>
<dbReference type="InterPro" id="IPR023299">
    <property type="entry name" value="ATPase_P-typ_cyto_dom_N"/>
</dbReference>
<dbReference type="InterPro" id="IPR018303">
    <property type="entry name" value="ATPase_P-typ_P_site"/>
</dbReference>
<dbReference type="InterPro" id="IPR023298">
    <property type="entry name" value="ATPase_P-typ_TM_dom_sf"/>
</dbReference>
<dbReference type="InterPro" id="IPR008250">
    <property type="entry name" value="ATPase_P-typ_transduc_dom_A_sf"/>
</dbReference>
<dbReference type="InterPro" id="IPR051949">
    <property type="entry name" value="Cation_Transport_ATPase"/>
</dbReference>
<dbReference type="InterPro" id="IPR036412">
    <property type="entry name" value="HAD-like_sf"/>
</dbReference>
<dbReference type="InterPro" id="IPR023214">
    <property type="entry name" value="HAD_sf"/>
</dbReference>
<dbReference type="InterPro" id="IPR027256">
    <property type="entry name" value="P-typ_ATPase_IB"/>
</dbReference>
<dbReference type="InterPro" id="IPR001757">
    <property type="entry name" value="P_typ_ATPase"/>
</dbReference>
<dbReference type="NCBIfam" id="TIGR01512">
    <property type="entry name" value="ATPase-IB2_Cd"/>
    <property type="match status" value="1"/>
</dbReference>
<dbReference type="NCBIfam" id="TIGR01525">
    <property type="entry name" value="ATPase-IB_hvy"/>
    <property type="match status" value="1"/>
</dbReference>
<dbReference type="NCBIfam" id="TIGR01494">
    <property type="entry name" value="ATPase_P-type"/>
    <property type="match status" value="1"/>
</dbReference>
<dbReference type="PANTHER" id="PTHR43079:SF1">
    <property type="entry name" value="CADMIUM_ZINC-TRANSPORTING ATPASE HMA1, CHLOROPLASTIC-RELATED"/>
    <property type="match status" value="1"/>
</dbReference>
<dbReference type="PANTHER" id="PTHR43079">
    <property type="entry name" value="PROBABLE CADMIUM/ZINC-TRANSPORTING ATPASE HMA1"/>
    <property type="match status" value="1"/>
</dbReference>
<dbReference type="Pfam" id="PF00122">
    <property type="entry name" value="E1-E2_ATPase"/>
    <property type="match status" value="1"/>
</dbReference>
<dbReference type="Pfam" id="PF00702">
    <property type="entry name" value="Hydrolase"/>
    <property type="match status" value="1"/>
</dbReference>
<dbReference type="PRINTS" id="PR00119">
    <property type="entry name" value="CATATPASE"/>
</dbReference>
<dbReference type="PRINTS" id="PR00941">
    <property type="entry name" value="CDATPASE"/>
</dbReference>
<dbReference type="SUPFAM" id="SSF81653">
    <property type="entry name" value="Calcium ATPase, transduction domain A"/>
    <property type="match status" value="1"/>
</dbReference>
<dbReference type="SUPFAM" id="SSF81665">
    <property type="entry name" value="Calcium ATPase, transmembrane domain M"/>
    <property type="match status" value="1"/>
</dbReference>
<dbReference type="SUPFAM" id="SSF56784">
    <property type="entry name" value="HAD-like"/>
    <property type="match status" value="1"/>
</dbReference>
<dbReference type="PROSITE" id="PS00154">
    <property type="entry name" value="ATPASE_E1_E2"/>
    <property type="match status" value="1"/>
</dbReference>
<sequence length="657" mass="67885">MTLTACEVTAAEAPFDRVSKTIPHPLSWGAALWSVVSVRWATVALLLFLAGLVAQLNGAPEAMWWTLYLACYLAGGWGSAWAGAQALRNKALDVDLLMIAAAVGAVAIGQIFDGALLIVIFATSGALDDIATRHTAESVKGLLDLAPDQAVVVQGDGSERVVAASELVVGDRVVVRPGDRIPADGAVLSGASDVDQRSITGESMPVAKARGDEVFAGTVNGSGVLHLVVTRDPSQTVVARIVELVADASATKAKTQLFIEKIEQRYSLGMVAATLALIVIPLMFGADLRPVLLRAMTFMIVASPCAVVLATMPPLLSAIANAGRHGVLVKSAVVVERLADTSIVALDKTGTLTRGIPRLASVAPLDPNVVDARRLLQLAAAAEQSSEHPLGRAIVAEARRRGIAIPPAKDFRAVPGCGVHALVGNDFVEIASPQSYRGAPLAELAPLLSAGATAAIVLLDGVAIGVLGLTDQLRPDAVESVAAMAALTAAPPVLLTGDNGRAAWRVARNAGITDVRAALLPEQKVEVVRNLQAGGHQVLLVGDGVNDAPAMAAARAAVAMGAGADLTLQTADGVTIRDELHTIPTIIGLARQARRVVTVNLAIAATFIAVLVLWDLFGQLPLPLGVVGHEGSTVLVALNGMRLLTNRSWRAAASAAR</sequence>